<comment type="function">
    <text evidence="2">Catalyzes the hydrolytic dehalogenation of small (S)-2-haloalkanoic acids to yield the corresponding (R)-2-hydroxyalkanoic acids (PubMed:1744048). Acts on acids of short chain lengths, C(2) to C(4), with inversion of configuration at C-2 (PubMed:1744048). Active with 2-halogenated carboxylic acids and converts only the S-isomer (or L-isomer) of 2-chloropropionic acid with inversion of configuration to produce R-lactate (or D-isomer) (PubMed:1744048).</text>
</comment>
<comment type="catalytic activity">
    <reaction evidence="2">
        <text>an (S)-2-haloacid + H2O = a (2R)-2-hydroxycarboxylate + a halide anion + H(+)</text>
        <dbReference type="Rhea" id="RHEA:11192"/>
        <dbReference type="ChEBI" id="CHEBI:15377"/>
        <dbReference type="ChEBI" id="CHEBI:15378"/>
        <dbReference type="ChEBI" id="CHEBI:16042"/>
        <dbReference type="ChEBI" id="CHEBI:58314"/>
        <dbReference type="ChEBI" id="CHEBI:137405"/>
        <dbReference type="EC" id="3.8.1.2"/>
    </reaction>
</comment>
<comment type="catalytic activity">
    <reaction evidence="2">
        <text>(S)-2-chloropropanoate + H2O = (R)-lactate + chloride + H(+)</text>
        <dbReference type="Rhea" id="RHEA:67956"/>
        <dbReference type="ChEBI" id="CHEBI:15377"/>
        <dbReference type="ChEBI" id="CHEBI:15378"/>
        <dbReference type="ChEBI" id="CHEBI:16004"/>
        <dbReference type="ChEBI" id="CHEBI:17996"/>
        <dbReference type="ChEBI" id="CHEBI:73934"/>
    </reaction>
</comment>
<comment type="biophysicochemical properties">
    <phDependence>
        <text evidence="2">Optimum pH is 9.5.</text>
    </phDependence>
</comment>
<comment type="subunit">
    <text evidence="3">Homodimer.</text>
</comment>
<comment type="biotechnology">
    <text evidence="6">(S)-2-haloacid dehalogenases may be used for the biodegradation of halogenated substances and their derivatives which are widely used as pesticides, herbicides and other industrial products.</text>
</comment>
<comment type="similarity">
    <text evidence="6">Belongs to the HAD-like hydrolase superfamily. S-2-haloalkanoic acid dehalogenase family.</text>
</comment>
<accession>Q60099</accession>
<accession>Q56757</accession>
<proteinExistence type="evidence at protein level"/>
<protein>
    <recommendedName>
        <fullName evidence="6">(S)-2-haloacid dehalogenase</fullName>
        <ecNumber evidence="2">3.8.1.2</ecNumber>
    </recommendedName>
    <alternativeName>
        <fullName evidence="5">2-haloalkanoic acid dehalogenase</fullName>
    </alternativeName>
    <alternativeName>
        <fullName>Halocarboxylic acid halidohydrolase</fullName>
    </alternativeName>
    <alternativeName>
        <fullName evidence="4">L-2-haloacid dehalogenase</fullName>
    </alternativeName>
</protein>
<keyword id="KW-0002">3D-structure</keyword>
<keyword id="KW-0903">Direct protein sequencing</keyword>
<keyword id="KW-0378">Hydrolase</keyword>
<name>HAD_XANAU</name>
<sequence length="253" mass="27469">MIKAVVFDAYGTLFDVQSVADATERAYPGRGEYITQVWRQKQLEYSWLRALMGRYADFWGVTREALAYTLGTLGLEPDESFLADMAQAYNRLTPYPDAAQCLAELAPLKRAILSNGAPDMLQALVANAGLTDSFDAVISVDAKRVFKPHPDSYALVEEVLGVTPAEVLFVSSNGFDVGGAKNFGFSVARVARLSQEALARELVSGTIAPLTMFKALRMREETYAEAPDFVVPALGDLPRLVRGMAGAHLAPAV</sequence>
<dbReference type="EC" id="3.8.1.2" evidence="2"/>
<dbReference type="EMBL" id="M81691">
    <property type="protein sequence ID" value="AAA27590.1"/>
    <property type="molecule type" value="Genomic_DNA"/>
</dbReference>
<dbReference type="EMBL" id="X86084">
    <property type="protein sequence ID" value="CAA60039.1"/>
    <property type="molecule type" value="Genomic_DNA"/>
</dbReference>
<dbReference type="PIR" id="S52840">
    <property type="entry name" value="S52840"/>
</dbReference>
<dbReference type="PDB" id="1AQ6">
    <property type="method" value="X-ray"/>
    <property type="resolution" value="1.95 A"/>
    <property type="chains" value="A/B=1-253"/>
</dbReference>
<dbReference type="PDB" id="1QQ5">
    <property type="method" value="X-ray"/>
    <property type="resolution" value="1.52 A"/>
    <property type="chains" value="A/B=1-253"/>
</dbReference>
<dbReference type="PDB" id="1QQ6">
    <property type="method" value="X-ray"/>
    <property type="resolution" value="2.10 A"/>
    <property type="chains" value="A/B=1-253"/>
</dbReference>
<dbReference type="PDB" id="1QQ7">
    <property type="method" value="X-ray"/>
    <property type="resolution" value="1.70 A"/>
    <property type="chains" value="A/B=1-253"/>
</dbReference>
<dbReference type="PDBsum" id="1AQ6"/>
<dbReference type="PDBsum" id="1QQ5"/>
<dbReference type="PDBsum" id="1QQ6"/>
<dbReference type="PDBsum" id="1QQ7"/>
<dbReference type="SMR" id="Q60099"/>
<dbReference type="DrugBank" id="DB03522">
    <property type="generic name" value="Aspartic Acid-4-Carboxymethyl Ester"/>
</dbReference>
<dbReference type="DrugBank" id="DB01942">
    <property type="generic name" value="Formic acid"/>
</dbReference>
<dbReference type="BRENDA" id="3.8.1.2">
    <property type="organism ID" value="1641"/>
</dbReference>
<dbReference type="EvolutionaryTrace" id="Q60099"/>
<dbReference type="GO" id="GO:0018784">
    <property type="term" value="F:(S)-2-haloacid dehalogenase activity"/>
    <property type="evidence" value="ECO:0007669"/>
    <property type="project" value="UniProtKB-EC"/>
</dbReference>
<dbReference type="CDD" id="cd02588">
    <property type="entry name" value="HAD_L2-DEX"/>
    <property type="match status" value="1"/>
</dbReference>
<dbReference type="Gene3D" id="3.40.50.1000">
    <property type="entry name" value="HAD superfamily/HAD-like"/>
    <property type="match status" value="1"/>
</dbReference>
<dbReference type="Gene3D" id="1.10.150.240">
    <property type="entry name" value="Putative phosphatase, domain 2"/>
    <property type="match status" value="1"/>
</dbReference>
<dbReference type="InterPro" id="IPR006328">
    <property type="entry name" value="2-HAD"/>
</dbReference>
<dbReference type="InterPro" id="IPR036412">
    <property type="entry name" value="HAD-like_sf"/>
</dbReference>
<dbReference type="InterPro" id="IPR006439">
    <property type="entry name" value="HAD-SF_hydro_IA"/>
</dbReference>
<dbReference type="InterPro" id="IPR023214">
    <property type="entry name" value="HAD_sf"/>
</dbReference>
<dbReference type="InterPro" id="IPR023198">
    <property type="entry name" value="PGP-like_dom2"/>
</dbReference>
<dbReference type="InterPro" id="IPR051540">
    <property type="entry name" value="S-2-haloacid_dehalogenase"/>
</dbReference>
<dbReference type="NCBIfam" id="TIGR01493">
    <property type="entry name" value="HAD-SF-IA-v2"/>
    <property type="match status" value="1"/>
</dbReference>
<dbReference type="NCBIfam" id="TIGR01509">
    <property type="entry name" value="HAD-SF-IA-v3"/>
    <property type="match status" value="1"/>
</dbReference>
<dbReference type="NCBIfam" id="TIGR01428">
    <property type="entry name" value="HAD_type_II"/>
    <property type="match status" value="1"/>
</dbReference>
<dbReference type="PANTHER" id="PTHR43316:SF3">
    <property type="entry name" value="HALOACID DEHALOGENASE, TYPE II (AFU_ORTHOLOGUE AFUA_2G07750)-RELATED"/>
    <property type="match status" value="1"/>
</dbReference>
<dbReference type="PANTHER" id="PTHR43316">
    <property type="entry name" value="HYDROLASE, HALOACID DELAHOGENASE-RELATED"/>
    <property type="match status" value="1"/>
</dbReference>
<dbReference type="Pfam" id="PF00702">
    <property type="entry name" value="Hydrolase"/>
    <property type="match status" value="1"/>
</dbReference>
<dbReference type="PRINTS" id="PR00413">
    <property type="entry name" value="HADHALOGNASE"/>
</dbReference>
<dbReference type="SFLD" id="SFLDF00045">
    <property type="entry name" value="2-haloacid_dehalogenase"/>
    <property type="match status" value="1"/>
</dbReference>
<dbReference type="SFLD" id="SFLDG01129">
    <property type="entry name" value="C1.5:_HAD__Beta-PGM__Phosphata"/>
    <property type="match status" value="1"/>
</dbReference>
<dbReference type="SUPFAM" id="SSF56784">
    <property type="entry name" value="HAD-like"/>
    <property type="match status" value="1"/>
</dbReference>
<evidence type="ECO:0000269" key="1">
    <source>
    </source>
</evidence>
<evidence type="ECO:0000269" key="2">
    <source>
    </source>
</evidence>
<evidence type="ECO:0000269" key="3">
    <source>
    </source>
</evidence>
<evidence type="ECO:0000303" key="4">
    <source>
    </source>
</evidence>
<evidence type="ECO:0000303" key="5">
    <source>
    </source>
</evidence>
<evidence type="ECO:0000305" key="6"/>
<evidence type="ECO:0000305" key="7">
    <source>
    </source>
</evidence>
<evidence type="ECO:0000305" key="8">
    <source>
    </source>
</evidence>
<evidence type="ECO:0007744" key="9">
    <source>
        <dbReference type="PDB" id="1AQ6"/>
    </source>
</evidence>
<evidence type="ECO:0007744" key="10">
    <source>
        <dbReference type="PDB" id="1QQ5"/>
    </source>
</evidence>
<evidence type="ECO:0007744" key="11">
    <source>
        <dbReference type="PDB" id="1QQ6"/>
    </source>
</evidence>
<evidence type="ECO:0007744" key="12">
    <source>
        <dbReference type="PDB" id="1QQ7"/>
    </source>
</evidence>
<evidence type="ECO:0007829" key="13">
    <source>
        <dbReference type="PDB" id="1QQ5"/>
    </source>
</evidence>
<reference key="1">
    <citation type="journal article" date="1991" name="J. Bacteriol.">
        <title>Characterization of the haloacid dehalogenase from Xanthobacter autotrophicus GJ10 and sequencing of the dhlB gene.</title>
        <authorList>
            <person name="van der Ploeg J."/>
            <person name="van Hall G."/>
            <person name="Janssen D.B."/>
        </authorList>
    </citation>
    <scope>NUCLEOTIDE SEQUENCE [GENOMIC DNA]</scope>
    <scope>PROTEIN SEQUENCE OF 1-18</scope>
    <scope>FUNCTION</scope>
    <scope>CATALYTIC ACTIVITY</scope>
    <scope>BIOPHYSICOCHEMICAL PROPERTIES</scope>
    <source>
        <strain>GJ10</strain>
    </source>
</reference>
<reference key="2">
    <citation type="journal article" date="1995" name="Biodegradation">
        <title>Sequence analysis of the upstream region of dhlB, the gene encoding haloalkanoic acid dehalogenase of Xanthobacter autotrophicus GJ10.</title>
        <authorList>
            <person name="van der Ploeg J."/>
            <person name="Janssen D.B."/>
        </authorList>
    </citation>
    <scope>NUCLEOTIDE SEQUENCE [GENOMIC DNA] OF 1-122</scope>
    <source>
        <strain>GJ10</strain>
    </source>
</reference>
<reference evidence="9" key="3">
    <citation type="journal article" date="1997" name="J. Biol. Chem.">
        <title>Three-dimensional structure of L-2-haloacid dehalogenase from Xanthobacter autotrophicus GJ10 complexed with the substrate-analogue formate.</title>
        <authorList>
            <person name="Ridder I.S."/>
            <person name="Rozeboom H.J."/>
            <person name="Kalk K.H."/>
            <person name="Janssen D.B."/>
            <person name="Dijkstra B.W."/>
        </authorList>
    </citation>
    <scope>X-RAY CRYSTALLOGRAPHY (1.95 ANGSTROMS) IN COMPLEX WITH FORMATE</scope>
    <scope>SEQUENCE REVISION TO 84</scope>
    <scope>SUBUNIT</scope>
    <scope>ACTIVE SITE</scope>
    <source>
        <strain>GJ10</strain>
    </source>
</reference>
<reference evidence="10 11 12" key="4">
    <citation type="journal article" date="1999" name="J. Biol. Chem.">
        <title>Crystal structures of intermediates in the dehalogenation of haloalkanoates by L-2-haloacid dehalogenase.</title>
        <authorList>
            <person name="Ridder I.S."/>
            <person name="Rozeboom H.J."/>
            <person name="Kalk K.H."/>
            <person name="Dijkstra B.W."/>
        </authorList>
    </citation>
    <scope>X-RAY CRYSTALLOGRAPHY (1.52 ANGSTROMS) IN COMPLEX WITH FORMATE; (S)-2-MONOCHLOROPROPIONATE AND MONOCHLOROACETATE</scope>
    <scope>ACTIVE SITE</scope>
</reference>
<gene>
    <name evidence="4" type="primary">dhlB</name>
</gene>
<organism>
    <name type="scientific">Xanthobacter autotrophicus</name>
    <dbReference type="NCBI Taxonomy" id="280"/>
    <lineage>
        <taxon>Bacteria</taxon>
        <taxon>Pseudomonadati</taxon>
        <taxon>Pseudomonadota</taxon>
        <taxon>Alphaproteobacteria</taxon>
        <taxon>Hyphomicrobiales</taxon>
        <taxon>Xanthobacteraceae</taxon>
        <taxon>Xanthobacter</taxon>
    </lineage>
</organism>
<feature type="chain" id="PRO_0000079159" description="(S)-2-haloacid dehalogenase">
    <location>
        <begin position="1"/>
        <end position="253"/>
    </location>
</feature>
<feature type="region of interest" description="Important for catalytic activity" evidence="7 8">
    <location>
        <begin position="171"/>
        <end position="176"/>
    </location>
</feature>
<feature type="active site" description="Nucleophile" evidence="1 3">
    <location>
        <position position="8"/>
    </location>
</feature>
<feature type="binding site" evidence="1 3 9 10 11 12">
    <location>
        <begin position="9"/>
        <end position="10"/>
    </location>
    <ligand>
        <name>an (S)-2-haloacid</name>
        <dbReference type="ChEBI" id="CHEBI:137405"/>
    </ligand>
</feature>
<feature type="binding site" evidence="1 11 12">
    <location>
        <position position="39"/>
    </location>
    <ligand>
        <name>an (S)-2-haloacid</name>
        <dbReference type="ChEBI" id="CHEBI:137405"/>
    </ligand>
</feature>
<feature type="binding site" evidence="1 3 9 10 11 12">
    <location>
        <begin position="114"/>
        <end position="115"/>
    </location>
    <ligand>
        <name>an (S)-2-haloacid</name>
        <dbReference type="ChEBI" id="CHEBI:137405"/>
    </ligand>
</feature>
<feature type="site" description="Important for catalytic activity" evidence="7 8">
    <location>
        <position position="12"/>
    </location>
</feature>
<feature type="site" description="Important for catalytic activity" evidence="7 8">
    <location>
        <position position="147"/>
    </location>
</feature>
<feature type="site" description="Important for catalytic activity" evidence="7 8">
    <location>
        <position position="153"/>
    </location>
</feature>
<feature type="sequence conflict" description="In Ref. 1 and 2." evidence="6" ref="1 2">
    <original>D</original>
    <variation>G</variation>
    <location>
        <position position="84"/>
    </location>
</feature>
<feature type="strand" evidence="13">
    <location>
        <begin position="4"/>
        <end position="7"/>
    </location>
</feature>
<feature type="turn" evidence="13">
    <location>
        <begin position="11"/>
        <end position="13"/>
    </location>
</feature>
<feature type="turn" evidence="13">
    <location>
        <begin position="16"/>
        <end position="19"/>
    </location>
</feature>
<feature type="helix" evidence="13">
    <location>
        <begin position="20"/>
        <end position="26"/>
    </location>
</feature>
<feature type="helix" evidence="13">
    <location>
        <begin position="31"/>
        <end position="52"/>
    </location>
</feature>
<feature type="helix" evidence="13">
    <location>
        <begin position="58"/>
        <end position="72"/>
    </location>
</feature>
<feature type="helix" evidence="13">
    <location>
        <begin position="79"/>
        <end position="86"/>
    </location>
</feature>
<feature type="helix" evidence="13">
    <location>
        <begin position="87"/>
        <end position="90"/>
    </location>
</feature>
<feature type="helix" evidence="13">
    <location>
        <begin position="98"/>
        <end position="105"/>
    </location>
</feature>
<feature type="strand" evidence="13">
    <location>
        <begin position="108"/>
        <end position="116"/>
    </location>
</feature>
<feature type="helix" evidence="13">
    <location>
        <begin position="118"/>
        <end position="127"/>
    </location>
</feature>
<feature type="helix" evidence="13">
    <location>
        <begin position="131"/>
        <end position="133"/>
    </location>
</feature>
<feature type="strand" evidence="13">
    <location>
        <begin position="135"/>
        <end position="139"/>
    </location>
</feature>
<feature type="helix" evidence="13">
    <location>
        <begin position="140"/>
        <end position="143"/>
    </location>
</feature>
<feature type="helix" evidence="13">
    <location>
        <begin position="150"/>
        <end position="160"/>
    </location>
</feature>
<feature type="helix" evidence="13">
    <location>
        <begin position="164"/>
        <end position="166"/>
    </location>
</feature>
<feature type="strand" evidence="13">
    <location>
        <begin position="167"/>
        <end position="172"/>
    </location>
</feature>
<feature type="helix" evidence="13">
    <location>
        <begin position="174"/>
        <end position="183"/>
    </location>
</feature>
<feature type="strand" evidence="13">
    <location>
        <begin position="186"/>
        <end position="190"/>
    </location>
</feature>
<feature type="helix" evidence="13">
    <location>
        <begin position="195"/>
        <end position="201"/>
    </location>
</feature>
<feature type="strand" evidence="13">
    <location>
        <begin position="204"/>
        <end position="206"/>
    </location>
</feature>
<feature type="helix" evidence="13">
    <location>
        <begin position="209"/>
        <end position="217"/>
    </location>
</feature>
<feature type="strand" evidence="13">
    <location>
        <begin position="228"/>
        <end position="233"/>
    </location>
</feature>
<feature type="helix" evidence="13">
    <location>
        <begin position="234"/>
        <end position="236"/>
    </location>
</feature>
<feature type="helix" evidence="13">
    <location>
        <begin position="237"/>
        <end position="244"/>
    </location>
</feature>